<protein>
    <recommendedName>
        <fullName>Cryptic protein</fullName>
    </recommendedName>
</protein>
<proteinExistence type="evidence at protein level"/>
<dbReference type="EMBL" id="U57720">
    <property type="protein sequence ID" value="AAC53042.1"/>
    <property type="molecule type" value="mRNA"/>
</dbReference>
<dbReference type="EMBL" id="BC100705">
    <property type="protein sequence ID" value="AAI00706.1"/>
    <property type="molecule type" value="mRNA"/>
</dbReference>
<dbReference type="EMBL" id="BC100706">
    <property type="protein sequence ID" value="AAI00707.1"/>
    <property type="molecule type" value="mRNA"/>
</dbReference>
<dbReference type="EMBL" id="BC100708">
    <property type="protein sequence ID" value="AAI00709.1"/>
    <property type="molecule type" value="mRNA"/>
</dbReference>
<dbReference type="EMBL" id="BC100711">
    <property type="protein sequence ID" value="AAI00712.1"/>
    <property type="molecule type" value="mRNA"/>
</dbReference>
<dbReference type="EMBL" id="AF242430">
    <property type="protein sequence ID" value="AAF76323.1"/>
    <property type="molecule type" value="Genomic_DNA"/>
</dbReference>
<dbReference type="CCDS" id="CCDS14869.1"/>
<dbReference type="RefSeq" id="NP_031711.1">
    <property type="nucleotide sequence ID" value="NM_007685.3"/>
</dbReference>
<dbReference type="BioGRID" id="198681">
    <property type="interactions" value="3"/>
</dbReference>
<dbReference type="FunCoup" id="P97766">
    <property type="interactions" value="73"/>
</dbReference>
<dbReference type="STRING" id="10090.ENSMUSP00000027298"/>
<dbReference type="GlyCosmos" id="P97766">
    <property type="glycosylation" value="1 site, No reported glycans"/>
</dbReference>
<dbReference type="GlyGen" id="P97766">
    <property type="glycosylation" value="1 site"/>
</dbReference>
<dbReference type="PhosphoSitePlus" id="P97766"/>
<dbReference type="PaxDb" id="10090-ENSMUSP00000027298"/>
<dbReference type="DNASU" id="12627"/>
<dbReference type="Ensembl" id="ENSMUST00000027298.5">
    <property type="protein sequence ID" value="ENSMUSP00000027298.4"/>
    <property type="gene ID" value="ENSMUSG00000026124.5"/>
</dbReference>
<dbReference type="GeneID" id="12627"/>
<dbReference type="KEGG" id="mmu:12627"/>
<dbReference type="UCSC" id="uc007aow.1">
    <property type="organism name" value="mouse"/>
</dbReference>
<dbReference type="AGR" id="MGI:109448"/>
<dbReference type="CTD" id="55997"/>
<dbReference type="MGI" id="MGI:109448">
    <property type="gene designation" value="Cfc1"/>
</dbReference>
<dbReference type="VEuPathDB" id="HostDB:ENSMUSG00000026124"/>
<dbReference type="eggNOG" id="KOG1217">
    <property type="taxonomic scope" value="Eukaryota"/>
</dbReference>
<dbReference type="GeneTree" id="ENSGT00940000162302"/>
<dbReference type="HOGENOM" id="CLU_092661_0_0_1"/>
<dbReference type="InParanoid" id="P97766"/>
<dbReference type="OMA" id="SRECSIP"/>
<dbReference type="OrthoDB" id="9893603at2759"/>
<dbReference type="PhylomeDB" id="P97766"/>
<dbReference type="TreeFam" id="TF333187"/>
<dbReference type="BioGRID-ORCS" id="12627">
    <property type="hits" value="2 hits in 75 CRISPR screens"/>
</dbReference>
<dbReference type="PRO" id="PR:P97766"/>
<dbReference type="Proteomes" id="UP000000589">
    <property type="component" value="Chromosome 1"/>
</dbReference>
<dbReference type="RNAct" id="P97766">
    <property type="molecule type" value="protein"/>
</dbReference>
<dbReference type="Bgee" id="ENSMUSG00000026124">
    <property type="expression patterns" value="Expressed in mesodermal cell in embryo and 26 other cell types or tissues"/>
</dbReference>
<dbReference type="GO" id="GO:0005576">
    <property type="term" value="C:extracellular region"/>
    <property type="evidence" value="ECO:0007669"/>
    <property type="project" value="UniProtKB-SubCell"/>
</dbReference>
<dbReference type="GO" id="GO:0005886">
    <property type="term" value="C:plasma membrane"/>
    <property type="evidence" value="ECO:0000304"/>
    <property type="project" value="Reactome"/>
</dbReference>
<dbReference type="GO" id="GO:0098552">
    <property type="term" value="C:side of membrane"/>
    <property type="evidence" value="ECO:0007669"/>
    <property type="project" value="UniProtKB-KW"/>
</dbReference>
<dbReference type="GO" id="GO:0070697">
    <property type="term" value="F:activin receptor binding"/>
    <property type="evidence" value="ECO:0000353"/>
    <property type="project" value="UniProtKB"/>
</dbReference>
<dbReference type="GO" id="GO:0009952">
    <property type="term" value="P:anterior/posterior pattern specification"/>
    <property type="evidence" value="ECO:0000316"/>
    <property type="project" value="MGI"/>
</dbReference>
<dbReference type="GO" id="GO:0060413">
    <property type="term" value="P:atrial septum morphogenesis"/>
    <property type="evidence" value="ECO:0000315"/>
    <property type="project" value="MGI"/>
</dbReference>
<dbReference type="GO" id="GO:0060976">
    <property type="term" value="P:coronary vasculature development"/>
    <property type="evidence" value="ECO:0000315"/>
    <property type="project" value="MGI"/>
</dbReference>
<dbReference type="GO" id="GO:0007368">
    <property type="term" value="P:determination of left/right symmetry"/>
    <property type="evidence" value="ECO:0000315"/>
    <property type="project" value="MGI"/>
</dbReference>
<dbReference type="GO" id="GO:0048546">
    <property type="term" value="P:digestive tract morphogenesis"/>
    <property type="evidence" value="ECO:0000315"/>
    <property type="project" value="MGI"/>
</dbReference>
<dbReference type="GO" id="GO:0007492">
    <property type="term" value="P:endoderm development"/>
    <property type="evidence" value="ECO:0000316"/>
    <property type="project" value="MGI"/>
</dbReference>
<dbReference type="GO" id="GO:0007565">
    <property type="term" value="P:female pregnancy"/>
    <property type="evidence" value="ECO:0007669"/>
    <property type="project" value="Ensembl"/>
</dbReference>
<dbReference type="GO" id="GO:0007369">
    <property type="term" value="P:gastrulation"/>
    <property type="evidence" value="ECO:0007669"/>
    <property type="project" value="UniProtKB-KW"/>
</dbReference>
<dbReference type="GO" id="GO:0001947">
    <property type="term" value="P:heart looping"/>
    <property type="evidence" value="ECO:0000315"/>
    <property type="project" value="MGI"/>
</dbReference>
<dbReference type="GO" id="GO:0003007">
    <property type="term" value="P:heart morphogenesis"/>
    <property type="evidence" value="ECO:0000315"/>
    <property type="project" value="MGI"/>
</dbReference>
<dbReference type="GO" id="GO:0060460">
    <property type="term" value="P:left lung morphogenesis"/>
    <property type="evidence" value="ECO:0000315"/>
    <property type="project" value="MGI"/>
</dbReference>
<dbReference type="GO" id="GO:0001889">
    <property type="term" value="P:liver development"/>
    <property type="evidence" value="ECO:0000315"/>
    <property type="project" value="MGI"/>
</dbReference>
<dbReference type="GO" id="GO:0038092">
    <property type="term" value="P:nodal signaling pathway"/>
    <property type="evidence" value="ECO:0000315"/>
    <property type="project" value="UniProtKB"/>
</dbReference>
<dbReference type="GO" id="GO:0009791">
    <property type="term" value="P:post-embryonic development"/>
    <property type="evidence" value="ECO:0000315"/>
    <property type="project" value="MGI"/>
</dbReference>
<dbReference type="GO" id="GO:0060541">
    <property type="term" value="P:respiratory system development"/>
    <property type="evidence" value="ECO:0000315"/>
    <property type="project" value="MGI"/>
</dbReference>
<dbReference type="GO" id="GO:0048536">
    <property type="term" value="P:spleen development"/>
    <property type="evidence" value="ECO:0000315"/>
    <property type="project" value="MGI"/>
</dbReference>
<dbReference type="CDD" id="cd00054">
    <property type="entry name" value="EGF_CA"/>
    <property type="match status" value="1"/>
</dbReference>
<dbReference type="FunFam" id="2.10.25.10:FF:000421">
    <property type="entry name" value="Teratocarcinoma-derived growth factor"/>
    <property type="match status" value="1"/>
</dbReference>
<dbReference type="Gene3D" id="2.10.25.10">
    <property type="entry name" value="Laminin"/>
    <property type="match status" value="1"/>
</dbReference>
<dbReference type="InterPro" id="IPR019011">
    <property type="entry name" value="Cryptic/Cripto_CFC-dom"/>
</dbReference>
<dbReference type="InterPro" id="IPR000742">
    <property type="entry name" value="EGF-like_dom"/>
</dbReference>
<dbReference type="Pfam" id="PF09443">
    <property type="entry name" value="CFC"/>
    <property type="match status" value="1"/>
</dbReference>
<dbReference type="SUPFAM" id="SSF57196">
    <property type="entry name" value="EGF/Laminin"/>
    <property type="match status" value="2"/>
</dbReference>
<dbReference type="PROSITE" id="PS00022">
    <property type="entry name" value="EGF_1"/>
    <property type="match status" value="1"/>
</dbReference>
<dbReference type="PROSITE" id="PS50026">
    <property type="entry name" value="EGF_3"/>
    <property type="match status" value="1"/>
</dbReference>
<accession>P97766</accession>
<accession>Q496U5</accession>
<accession>Q9JIB7</accession>
<organism>
    <name type="scientific">Mus musculus</name>
    <name type="common">Mouse</name>
    <dbReference type="NCBI Taxonomy" id="10090"/>
    <lineage>
        <taxon>Eukaryota</taxon>
        <taxon>Metazoa</taxon>
        <taxon>Chordata</taxon>
        <taxon>Craniata</taxon>
        <taxon>Vertebrata</taxon>
        <taxon>Euteleostomi</taxon>
        <taxon>Mammalia</taxon>
        <taxon>Eutheria</taxon>
        <taxon>Euarchontoglires</taxon>
        <taxon>Glires</taxon>
        <taxon>Rodentia</taxon>
        <taxon>Myomorpha</taxon>
        <taxon>Muroidea</taxon>
        <taxon>Muridae</taxon>
        <taxon>Murinae</taxon>
        <taxon>Mus</taxon>
        <taxon>Mus</taxon>
    </lineage>
</organism>
<gene>
    <name type="primary">Cfc1</name>
</gene>
<feature type="signal peptide" evidence="2">
    <location>
        <begin position="1"/>
        <end position="35"/>
    </location>
</feature>
<feature type="chain" id="PRO_0000044631" description="Cryptic protein">
    <location>
        <begin position="36"/>
        <end position="166"/>
    </location>
</feature>
<feature type="propeptide" id="PRO_0000395409" description="Removed in mature form" evidence="1">
    <location>
        <begin position="167"/>
        <end position="202"/>
    </location>
</feature>
<feature type="domain" description="EGF-like" evidence="3">
    <location>
        <begin position="94"/>
        <end position="123"/>
    </location>
</feature>
<feature type="lipid moiety-binding region" description="GPI-anchor amidated aspartate" evidence="1">
    <location>
        <position position="166"/>
    </location>
</feature>
<feature type="glycosylation site" description="N-linked (GlcNAc...) asparagine" evidence="2">
    <location>
        <position position="65"/>
    </location>
</feature>
<feature type="disulfide bond" evidence="3">
    <location>
        <begin position="98"/>
        <end position="105"/>
    </location>
</feature>
<feature type="disulfide bond" evidence="3">
    <location>
        <begin position="99"/>
        <end position="111"/>
    </location>
</feature>
<feature type="disulfide bond" evidence="3">
    <location>
        <begin position="113"/>
        <end position="122"/>
    </location>
</feature>
<feature type="sequence conflict" description="In Ref. 2; AAI00707." evidence="6" ref="2">
    <original>P</original>
    <variation>T</variation>
    <location>
        <position position="83"/>
    </location>
</feature>
<evidence type="ECO:0000250" key="1"/>
<evidence type="ECO:0000255" key="2"/>
<evidence type="ECO:0000255" key="3">
    <source>
        <dbReference type="PROSITE-ProRule" id="PRU00076"/>
    </source>
</evidence>
<evidence type="ECO:0000269" key="4">
    <source>
    </source>
</evidence>
<evidence type="ECO:0000269" key="5">
    <source>
    </source>
</evidence>
<evidence type="ECO:0000305" key="6"/>
<sequence>MRANSPTQGISLKMHQARPLFLVTVALQLIGLGYSYQSEGDGAREVSNILSPVIPGTTLDRTLSNSSRKNDIPEGARLWDSLPDSSTLGESAVPVSRCCHNGGTCVLGSFCVCPAYFTGRYCEHDQRRRDCGALGHGAWTLHSCRLCRCIFSALYCLPHQTFSHCDLKSFLSSGARGSRECSIPSLLLLVLCLLLQGVAGKG</sequence>
<name>CFC1_MOUSE</name>
<comment type="function">
    <text evidence="4 5">Nodal coreceptor involved in the correct establishment of the left-right axis. May play a role in mesoderm and/or neural patterning during gastrulation.</text>
</comment>
<comment type="subcellular location">
    <subcellularLocation>
        <location evidence="1">Cell membrane</location>
        <topology evidence="1">Lipid-anchor</topology>
        <topology evidence="1">GPI-anchor</topology>
    </subcellularLocation>
    <subcellularLocation>
        <location evidence="1">Secreted</location>
    </subcellularLocation>
</comment>
<comment type="tissue specificity">
    <text evidence="5">No expressed in adult tissues.</text>
</comment>
<comment type="developmental stage">
    <text evidence="5">Expressed during gastrulation (from 6.5 dpc to 11 dpc) in two spatial domains that correspond to the axial and lateral mesoderm. In the first domain expression is progressively localized to the anterior primitive streak, the head process, and the node and notochordal. In the second domain, expression is initially concentrated in the lateral region of the egg cylinder, and is later found circumferentially in the intermediate and lateral plate mesoderm. Furthermore, the expression can also be detected at the early head-fold stage in the midline neuroectoderm, and consequently is an early marker for the prospective floor plate of the neural tube. Expression ceases at the end of gastrulation, and has not been observed in later embryonic stages.</text>
</comment>
<comment type="PTM">
    <text evidence="5">N-glycosylated.</text>
</comment>
<comment type="disruption phenotype">
    <text evidence="4">Positional defects in internal organs. The lung presents a right pulmonary isomerism. The stomach is located on either the left or the right and the spleen is small and has an abnormal shape. The apex of the heart pointed to the right or left. In addition malpositioning of heart outflow tracts is observed, the aorta is connected to the right ventricle and emerged from the heart in a ventral position and to the right of the pulmonary artery. This one is connected to either the left or the right ventricle.</text>
</comment>
<comment type="similarity">
    <text evidence="6">Belongs to the EGF-CFC (Cripto-1/FRL1/Cryptic) family.</text>
</comment>
<reference key="1">
    <citation type="journal article" date="1997" name="Development">
        <title>A differential display strategy identifies Cryptic, a novel EGF-related gene expressed in the axial and lateral mesoderm during mouse gastrulation.</title>
        <authorList>
            <person name="Shen M.M."/>
            <person name="Wang H."/>
            <person name="Leder P."/>
        </authorList>
    </citation>
    <scope>NUCLEOTIDE SEQUENCE [MRNA]</scope>
    <scope>FUNCTION</scope>
    <scope>TISSUE SPECIFICITY</scope>
    <scope>DEVELOPMENTAL STAGE</scope>
    <scope>GLYCOSYLATION</scope>
    <source>
        <strain>129/Sv</strain>
    </source>
</reference>
<reference key="2">
    <citation type="journal article" date="2004" name="Genome Res.">
        <title>The status, quality, and expansion of the NIH full-length cDNA project: the Mammalian Gene Collection (MGC).</title>
        <authorList>
            <consortium name="The MGC Project Team"/>
        </authorList>
    </citation>
    <scope>NUCLEOTIDE SEQUENCE [LARGE SCALE MRNA]</scope>
</reference>
<reference key="3">
    <citation type="journal article" date="2000" name="Gene">
        <title>Subtractive hybridization identifies chick-cripto, a novel EGF-CFC ortholog expressed during gastrulation, neurulation and early cardiogenesis.</title>
        <authorList>
            <person name="Colas J.-F."/>
            <person name="Schoenwolf G.C."/>
        </authorList>
    </citation>
    <scope>NUCLEOTIDE SEQUENCE [GENOMIC DNA] OF 1-154</scope>
</reference>
<reference key="4">
    <citation type="journal article" date="1999" name="Curr. Biol.">
        <title>A role of the cryptic gene in the correct establishment of the left-right axis.</title>
        <authorList>
            <person name="Gaio U."/>
            <person name="Schweickert A."/>
            <person name="Fischer A."/>
            <person name="Garratt A.N."/>
            <person name="Mueller T."/>
            <person name="Oezcelik C."/>
            <person name="Lankes W."/>
            <person name="Strehle M."/>
            <person name="Britsch S."/>
            <person name="Blum M."/>
            <person name="Birchmeier C."/>
        </authorList>
    </citation>
    <scope>FUNCTION</scope>
    <scope>DISRUPTION PHENOTYPE</scope>
</reference>
<keyword id="KW-1003">Cell membrane</keyword>
<keyword id="KW-0217">Developmental protein</keyword>
<keyword id="KW-1015">Disulfide bond</keyword>
<keyword id="KW-0245">EGF-like domain</keyword>
<keyword id="KW-0306">Gastrulation</keyword>
<keyword id="KW-0325">Glycoprotein</keyword>
<keyword id="KW-0336">GPI-anchor</keyword>
<keyword id="KW-0449">Lipoprotein</keyword>
<keyword id="KW-0472">Membrane</keyword>
<keyword id="KW-1185">Reference proteome</keyword>
<keyword id="KW-0964">Secreted</keyword>
<keyword id="KW-0732">Signal</keyword>